<organism>
    <name type="scientific">Arabidopsis thaliana</name>
    <name type="common">Mouse-ear cress</name>
    <dbReference type="NCBI Taxonomy" id="3702"/>
    <lineage>
        <taxon>Eukaryota</taxon>
        <taxon>Viridiplantae</taxon>
        <taxon>Streptophyta</taxon>
        <taxon>Embryophyta</taxon>
        <taxon>Tracheophyta</taxon>
        <taxon>Spermatophyta</taxon>
        <taxon>Magnoliopsida</taxon>
        <taxon>eudicotyledons</taxon>
        <taxon>Gunneridae</taxon>
        <taxon>Pentapetalae</taxon>
        <taxon>rosids</taxon>
        <taxon>malvids</taxon>
        <taxon>Brassicales</taxon>
        <taxon>Brassicaceae</taxon>
        <taxon>Camelineae</taxon>
        <taxon>Arabidopsis</taxon>
    </lineage>
</organism>
<keyword id="KW-0119">Carbohydrate metabolism</keyword>
<keyword id="KW-0963">Cytoplasm</keyword>
<keyword id="KW-0313">Glucose metabolism</keyword>
<keyword id="KW-0521">NADP</keyword>
<keyword id="KW-0560">Oxidoreductase</keyword>
<keyword id="KW-1185">Reference proteome</keyword>
<name>G6PD5_ARATH</name>
<comment type="function">
    <text evidence="4">Catalyzes the rate-limiting step of the oxidative pentose-phosphate pathway, which represents a route for the dissimilation of carbohydrates besides glycolysis (PubMed:15634201). The main function of this enzyme is to provide reducing power (NADPH) and pentose phosphates for fatty acid and nucleic acid synthesis which are involved in membrane synthesis and cell division (PubMed:15634201).</text>
</comment>
<comment type="catalytic activity">
    <reaction evidence="4">
        <text>D-glucose 6-phosphate + NADP(+) = 6-phospho-D-glucono-1,5-lactone + NADPH + H(+)</text>
        <dbReference type="Rhea" id="RHEA:15841"/>
        <dbReference type="ChEBI" id="CHEBI:15378"/>
        <dbReference type="ChEBI" id="CHEBI:57783"/>
        <dbReference type="ChEBI" id="CHEBI:57955"/>
        <dbReference type="ChEBI" id="CHEBI:58349"/>
        <dbReference type="ChEBI" id="CHEBI:61548"/>
        <dbReference type="EC" id="1.1.1.49"/>
    </reaction>
</comment>
<comment type="activity regulation">
    <text evidence="3">Regulated by metabolites.</text>
</comment>
<comment type="biophysicochemical properties">
    <kinetics>
        <KM evidence="4">19 uM for NADP</KM>
    </kinetics>
    <phDependence>
        <text evidence="4">Optimum pH is 8.5.</text>
    </phDependence>
</comment>
<comment type="pathway">
    <text evidence="8">Carbohydrate degradation; pentose phosphate pathway; D-ribulose 5-phosphate from D-glucose 6-phosphate (oxidative stage): step 1/3.</text>
</comment>
<comment type="subunit">
    <text evidence="1">Forms homodimer.</text>
</comment>
<comment type="subcellular location">
    <subcellularLocation>
        <location evidence="5">Cytoplasm</location>
        <location evidence="5">Cytosol</location>
    </subcellularLocation>
</comment>
<comment type="tissue specificity">
    <text evidence="4">Expressed in leaves and stems.</text>
</comment>
<comment type="miscellaneous">
    <text evidence="7">There are 6 glucose-6-phosphate 1-dehydrogenase genes in A.thaliana.</text>
</comment>
<comment type="similarity">
    <text evidence="8">Belongs to the glucose-6-phosphate dehydrogenase family.</text>
</comment>
<accession>Q9LK23</accession>
<accession>Q8VZD0</accession>
<accession>Q9SUK0</accession>
<protein>
    <recommendedName>
        <fullName evidence="8">Glucose-6-phosphate 1-dehydrogenase 5, cytoplasmic</fullName>
        <shortName evidence="7">AtG6PD5</shortName>
        <shortName evidence="8">G6PDH5</shortName>
        <ecNumber evidence="4">1.1.1.49</ecNumber>
    </recommendedName>
</protein>
<sequence>MGSGQWHMEKRSTLKNDSFVKEYNPVTETGSLSIIVLGASGDLAKKKTFPALFNLFHQGFLNPDEVHIFGYARSKITDEELRDKIRGYLVDEKNASKKTEALSKFLKLIKYVSGPYDSEEGFKRLDKAILEHEISKKTAEGSSRRLFYLALPPSVYPPVSKMIKAWCTNKSDLGGWTRIVVEKPFGKDLESAEQLSSQIGALFEEPQIYRIDHYLGKELVQNMLVLRFANRLFLPLWNRDNIANVQIVFREDFGTEGRGGYFDEYGIIRDIIQNHLLQVLCLVAMEKPISLKPEHIRDEKVKVLQSVIPIKDEEVVLGQYEGYRDDPTVPNDSNTPTFATTILRINNERWEGVPFILKAGKAMSSKKADIRIQFKDVPGDIFKCQNQGRNEFVIRLQPSEAMYMKLTVKQPGLEMQTVQSELDLSYKQRYQDVSIPEAYERLILDTIRGDQQHFVRRDELKAAWEIFTPLLHRIDKGEVKSVPYKQGSRGPAEADQLLKKAGYMQTHGYIWIPPTL</sequence>
<proteinExistence type="evidence at protein level"/>
<gene>
    <name evidence="7" type="primary">G6PD5</name>
    <name evidence="6" type="synonym">ACG9</name>
    <name evidence="9" type="ordered locus">At3g27300</name>
    <name evidence="10" type="ORF">K17E12.12</name>
</gene>
<feature type="chain" id="PRO_0000068097" description="Glucose-6-phosphate 1-dehydrogenase 5, cytoplasmic">
    <location>
        <begin position="1"/>
        <end position="516"/>
    </location>
</feature>
<feature type="active site" description="Proton acceptor" evidence="1">
    <location>
        <position position="275"/>
    </location>
</feature>
<feature type="binding site" evidence="2">
    <location>
        <begin position="38"/>
        <end position="45"/>
    </location>
    <ligand>
        <name>NADP(+)</name>
        <dbReference type="ChEBI" id="CHEBI:58349"/>
        <label>1</label>
    </ligand>
</feature>
<feature type="binding site" evidence="2">
    <location>
        <position position="73"/>
    </location>
    <ligand>
        <name>NADP(+)</name>
        <dbReference type="ChEBI" id="CHEBI:58349"/>
        <label>1</label>
    </ligand>
</feature>
<feature type="binding site" evidence="2">
    <location>
        <position position="156"/>
    </location>
    <ligand>
        <name>NADP(+)</name>
        <dbReference type="ChEBI" id="CHEBI:58349"/>
        <label>1</label>
    </ligand>
</feature>
<feature type="binding site" evidence="2">
    <location>
        <position position="183"/>
    </location>
    <ligand>
        <name>D-glucose 6-phosphate</name>
        <dbReference type="ChEBI" id="CHEBI:61548"/>
    </ligand>
</feature>
<feature type="binding site" evidence="2">
    <location>
        <position position="183"/>
    </location>
    <ligand>
        <name>NADP(+)</name>
        <dbReference type="ChEBI" id="CHEBI:58349"/>
        <label>1</label>
    </ligand>
</feature>
<feature type="binding site" evidence="2">
    <location>
        <begin position="213"/>
        <end position="217"/>
    </location>
    <ligand>
        <name>D-glucose 6-phosphate</name>
        <dbReference type="ChEBI" id="CHEBI:61548"/>
    </ligand>
</feature>
<feature type="binding site" evidence="2">
    <location>
        <position position="251"/>
    </location>
    <ligand>
        <name>D-glucose 6-phosphate</name>
        <dbReference type="ChEBI" id="CHEBI:61548"/>
    </ligand>
</feature>
<feature type="binding site" evidence="2">
    <location>
        <position position="270"/>
    </location>
    <ligand>
        <name>D-glucose 6-phosphate</name>
        <dbReference type="ChEBI" id="CHEBI:61548"/>
    </ligand>
</feature>
<feature type="binding site" evidence="2">
    <location>
        <position position="358"/>
    </location>
    <ligand>
        <name>NADP(+)</name>
        <dbReference type="ChEBI" id="CHEBI:58349"/>
        <label>2</label>
    </ligand>
</feature>
<feature type="binding site" evidence="2">
    <location>
        <position position="361"/>
    </location>
    <ligand>
        <name>D-glucose 6-phosphate</name>
        <dbReference type="ChEBI" id="CHEBI:61548"/>
    </ligand>
</feature>
<feature type="binding site" evidence="2">
    <location>
        <position position="366"/>
    </location>
    <ligand>
        <name>D-glucose 6-phosphate</name>
        <dbReference type="ChEBI" id="CHEBI:61548"/>
    </ligand>
</feature>
<feature type="binding site" evidence="2">
    <location>
        <position position="367"/>
    </location>
    <ligand>
        <name>NADP(+)</name>
        <dbReference type="ChEBI" id="CHEBI:58349"/>
        <label>2</label>
    </ligand>
</feature>
<feature type="binding site" evidence="2">
    <location>
        <position position="371"/>
    </location>
    <ligand>
        <name>NADP(+)</name>
        <dbReference type="ChEBI" id="CHEBI:58349"/>
        <label>2</label>
    </ligand>
</feature>
<feature type="binding site" evidence="2">
    <location>
        <position position="395"/>
    </location>
    <ligand>
        <name>NADP(+)</name>
        <dbReference type="ChEBI" id="CHEBI:58349"/>
        <label>2</label>
    </ligand>
</feature>
<feature type="binding site" evidence="2">
    <location>
        <position position="397"/>
    </location>
    <ligand>
        <name>D-glucose 6-phosphate</name>
        <dbReference type="ChEBI" id="CHEBI:61548"/>
    </ligand>
</feature>
<feature type="binding site" evidence="2">
    <location>
        <begin position="403"/>
        <end position="405"/>
    </location>
    <ligand>
        <name>NADP(+)</name>
        <dbReference type="ChEBI" id="CHEBI:58349"/>
        <label>2</label>
    </ligand>
</feature>
<feature type="binding site" evidence="2">
    <location>
        <begin position="423"/>
        <end position="425"/>
    </location>
    <ligand>
        <name>NADP(+)</name>
        <dbReference type="ChEBI" id="CHEBI:58349"/>
        <label>2</label>
    </ligand>
</feature>
<feature type="binding site" evidence="2">
    <location>
        <position position="489"/>
    </location>
    <ligand>
        <name>NADP(+)</name>
        <dbReference type="ChEBI" id="CHEBI:58349"/>
        <label>2</label>
    </ligand>
</feature>
<feature type="binding site" evidence="2">
    <location>
        <position position="511"/>
    </location>
    <ligand>
        <name>NADP(+)</name>
        <dbReference type="ChEBI" id="CHEBI:58349"/>
        <label>2</label>
    </ligand>
</feature>
<feature type="sequence conflict" description="In Ref. 1; CAB52674." evidence="8" ref="1">
    <original>V</original>
    <variation>I</variation>
    <location>
        <position position="26"/>
    </location>
</feature>
<feature type="sequence conflict" description="In Ref. 4; AAL57688." evidence="8" ref="4">
    <original>D</original>
    <variation>G</variation>
    <location>
        <position position="376"/>
    </location>
</feature>
<reference key="1">
    <citation type="journal article" date="1999" name="Plant Mol. Biol.">
        <title>Evidence for functional convergence of redox regulation in G6PDH isoforms of cyanobacteria and higher plants.</title>
        <authorList>
            <person name="Wendt U.K."/>
            <person name="Hauschild R."/>
            <person name="Lange C."/>
            <person name="Pietersma M."/>
            <person name="Wenderoth I."/>
            <person name="von Schaewen A."/>
        </authorList>
    </citation>
    <scope>NUCLEOTIDE SEQUENCE [MRNA]</scope>
</reference>
<reference key="2">
    <citation type="journal article" date="2000" name="DNA Res.">
        <title>Structural analysis of Arabidopsis thaliana chromosome 3. II. Sequence features of the 4,251,695 bp regions covered by 90 P1, TAC and BAC clones.</title>
        <authorList>
            <person name="Kaneko T."/>
            <person name="Katoh T."/>
            <person name="Sato S."/>
            <person name="Nakamura Y."/>
            <person name="Asamizu E."/>
            <person name="Tabata S."/>
        </authorList>
    </citation>
    <scope>NUCLEOTIDE SEQUENCE [LARGE SCALE GENOMIC DNA]</scope>
    <source>
        <strain>cv. Columbia</strain>
    </source>
</reference>
<reference key="3">
    <citation type="journal article" date="2017" name="Plant J.">
        <title>Araport11: a complete reannotation of the Arabidopsis thaliana reference genome.</title>
        <authorList>
            <person name="Cheng C.Y."/>
            <person name="Krishnakumar V."/>
            <person name="Chan A.P."/>
            <person name="Thibaud-Nissen F."/>
            <person name="Schobel S."/>
            <person name="Town C.D."/>
        </authorList>
    </citation>
    <scope>GENOME REANNOTATION</scope>
    <source>
        <strain>cv. Columbia</strain>
    </source>
</reference>
<reference key="4">
    <citation type="journal article" date="2003" name="Science">
        <title>Empirical analysis of transcriptional activity in the Arabidopsis genome.</title>
        <authorList>
            <person name="Yamada K."/>
            <person name="Lim J."/>
            <person name="Dale J.M."/>
            <person name="Chen H."/>
            <person name="Shinn P."/>
            <person name="Palm C.J."/>
            <person name="Southwick A.M."/>
            <person name="Wu H.C."/>
            <person name="Kim C.J."/>
            <person name="Nguyen M."/>
            <person name="Pham P.K."/>
            <person name="Cheuk R.F."/>
            <person name="Karlin-Newmann G."/>
            <person name="Liu S.X."/>
            <person name="Lam B."/>
            <person name="Sakano H."/>
            <person name="Wu T."/>
            <person name="Yu G."/>
            <person name="Miranda M."/>
            <person name="Quach H.L."/>
            <person name="Tripp M."/>
            <person name="Chang C.H."/>
            <person name="Lee J.M."/>
            <person name="Toriumi M.J."/>
            <person name="Chan M.M."/>
            <person name="Tang C.C."/>
            <person name="Onodera C.S."/>
            <person name="Deng J.M."/>
            <person name="Akiyama K."/>
            <person name="Ansari Y."/>
            <person name="Arakawa T."/>
            <person name="Banh J."/>
            <person name="Banno F."/>
            <person name="Bowser L."/>
            <person name="Brooks S.Y."/>
            <person name="Carninci P."/>
            <person name="Chao Q."/>
            <person name="Choy N."/>
            <person name="Enju A."/>
            <person name="Goldsmith A.D."/>
            <person name="Gurjal M."/>
            <person name="Hansen N.F."/>
            <person name="Hayashizaki Y."/>
            <person name="Johnson-Hopson C."/>
            <person name="Hsuan V.W."/>
            <person name="Iida K."/>
            <person name="Karnes M."/>
            <person name="Khan S."/>
            <person name="Koesema E."/>
            <person name="Ishida J."/>
            <person name="Jiang P.X."/>
            <person name="Jones T."/>
            <person name="Kawai J."/>
            <person name="Kamiya A."/>
            <person name="Meyers C."/>
            <person name="Nakajima M."/>
            <person name="Narusaka M."/>
            <person name="Seki M."/>
            <person name="Sakurai T."/>
            <person name="Satou M."/>
            <person name="Tamse R."/>
            <person name="Vaysberg M."/>
            <person name="Wallender E.K."/>
            <person name="Wong C."/>
            <person name="Yamamura Y."/>
            <person name="Yuan S."/>
            <person name="Shinozaki K."/>
            <person name="Davis R.W."/>
            <person name="Theologis A."/>
            <person name="Ecker J.R."/>
        </authorList>
    </citation>
    <scope>NUCLEOTIDE SEQUENCE [LARGE SCALE MRNA]</scope>
    <source>
        <strain>cv. Columbia</strain>
    </source>
</reference>
<reference key="5">
    <citation type="journal article" date="2005" name="Plant J.">
        <title>Genome-wide analysis of glucose-6-phosphate dehydrogenases in Arabidopsis.</title>
        <authorList>
            <person name="Wakao S."/>
            <person name="Benning C."/>
        </authorList>
    </citation>
    <scope>FUNCTION</scope>
    <scope>CATALYTIC ACTIVITY</scope>
    <scope>BIOPHYSICOCHEMICAL PROPERTIES</scope>
    <scope>TISSUE SPECIFICITY</scope>
</reference>
<reference key="6">
    <citation type="journal article" date="2011" name="Plant J.">
        <title>Alternative targeting of Arabidopsis plastidic glucose-6-phosphate dehydrogenase G6PD1 involves cysteine-dependent interaction with G6PD4 in the cytosol.</title>
        <authorList>
            <person name="Meyer T."/>
            <person name="Hoelscher C."/>
            <person name="Schwoeppe C."/>
            <person name="von Schaewen A."/>
        </authorList>
    </citation>
    <scope>SUBCELLULAR LOCATION</scope>
</reference>
<evidence type="ECO:0000250" key="1">
    <source>
        <dbReference type="UniProtKB" id="P11411"/>
    </source>
</evidence>
<evidence type="ECO:0000250" key="2">
    <source>
        <dbReference type="UniProtKB" id="P11413"/>
    </source>
</evidence>
<evidence type="ECO:0000250" key="3">
    <source>
        <dbReference type="UniProtKB" id="Q43839"/>
    </source>
</evidence>
<evidence type="ECO:0000269" key="4">
    <source>
    </source>
</evidence>
<evidence type="ECO:0000269" key="5">
    <source>
    </source>
</evidence>
<evidence type="ECO:0000303" key="6">
    <source>
    </source>
</evidence>
<evidence type="ECO:0000303" key="7">
    <source>
    </source>
</evidence>
<evidence type="ECO:0000305" key="8"/>
<evidence type="ECO:0000312" key="9">
    <source>
        <dbReference type="Araport" id="AT3G27300"/>
    </source>
</evidence>
<evidence type="ECO:0000312" key="10">
    <source>
        <dbReference type="EMBL" id="BAB02125.1"/>
    </source>
</evidence>
<dbReference type="EC" id="1.1.1.49" evidence="4"/>
<dbReference type="EMBL" id="AJ010970">
    <property type="protein sequence ID" value="CAB52674.1"/>
    <property type="molecule type" value="mRNA"/>
</dbReference>
<dbReference type="EMBL" id="AP000381">
    <property type="protein sequence ID" value="BAB02125.1"/>
    <property type="molecule type" value="Genomic_DNA"/>
</dbReference>
<dbReference type="EMBL" id="CP002686">
    <property type="protein sequence ID" value="AEE77290.1"/>
    <property type="molecule type" value="Genomic_DNA"/>
</dbReference>
<dbReference type="EMBL" id="CP002686">
    <property type="protein sequence ID" value="AEE77291.1"/>
    <property type="molecule type" value="Genomic_DNA"/>
</dbReference>
<dbReference type="EMBL" id="CP002686">
    <property type="protein sequence ID" value="AEE77292.1"/>
    <property type="molecule type" value="Genomic_DNA"/>
</dbReference>
<dbReference type="EMBL" id="AY065054">
    <property type="protein sequence ID" value="AAL57688.1"/>
    <property type="molecule type" value="mRNA"/>
</dbReference>
<dbReference type="PIR" id="T52611">
    <property type="entry name" value="T52611"/>
</dbReference>
<dbReference type="RefSeq" id="NP_001030780.1">
    <property type="nucleotide sequence ID" value="NM_001035703.3"/>
</dbReference>
<dbReference type="RefSeq" id="NP_001078214.1">
    <property type="nucleotide sequence ID" value="NM_001084745.1"/>
</dbReference>
<dbReference type="RefSeq" id="NP_189366.1">
    <property type="nucleotide sequence ID" value="NM_113644.5"/>
</dbReference>
<dbReference type="SMR" id="Q9LK23"/>
<dbReference type="FunCoup" id="Q9LK23">
    <property type="interactions" value="2486"/>
</dbReference>
<dbReference type="STRING" id="3702.Q9LK23"/>
<dbReference type="iPTMnet" id="Q9LK23"/>
<dbReference type="PaxDb" id="3702-AT3G27300.2"/>
<dbReference type="ProteomicsDB" id="247383"/>
<dbReference type="EnsemblPlants" id="AT3G27300.1">
    <property type="protein sequence ID" value="AT3G27300.1"/>
    <property type="gene ID" value="AT3G27300"/>
</dbReference>
<dbReference type="EnsemblPlants" id="AT3G27300.2">
    <property type="protein sequence ID" value="AT3G27300.2"/>
    <property type="gene ID" value="AT3G27300"/>
</dbReference>
<dbReference type="EnsemblPlants" id="AT3G27300.3">
    <property type="protein sequence ID" value="AT3G27300.3"/>
    <property type="gene ID" value="AT3G27300"/>
</dbReference>
<dbReference type="GeneID" id="822349"/>
<dbReference type="Gramene" id="AT3G27300.1">
    <property type="protein sequence ID" value="AT3G27300.1"/>
    <property type="gene ID" value="AT3G27300"/>
</dbReference>
<dbReference type="Gramene" id="AT3G27300.2">
    <property type="protein sequence ID" value="AT3G27300.2"/>
    <property type="gene ID" value="AT3G27300"/>
</dbReference>
<dbReference type="Gramene" id="AT3G27300.3">
    <property type="protein sequence ID" value="AT3G27300.3"/>
    <property type="gene ID" value="AT3G27300"/>
</dbReference>
<dbReference type="KEGG" id="ath:AT3G27300"/>
<dbReference type="Araport" id="AT3G27300"/>
<dbReference type="TAIR" id="AT3G27300">
    <property type="gene designation" value="G6PD5"/>
</dbReference>
<dbReference type="eggNOG" id="KOG0563">
    <property type="taxonomic scope" value="Eukaryota"/>
</dbReference>
<dbReference type="HOGENOM" id="CLU_013524_2_3_1"/>
<dbReference type="InParanoid" id="Q9LK23"/>
<dbReference type="PhylomeDB" id="Q9LK23"/>
<dbReference type="BRENDA" id="1.1.1.49">
    <property type="organism ID" value="399"/>
</dbReference>
<dbReference type="UniPathway" id="UPA00115">
    <property type="reaction ID" value="UER00408"/>
</dbReference>
<dbReference type="PRO" id="PR:Q9LK23"/>
<dbReference type="Proteomes" id="UP000006548">
    <property type="component" value="Chromosome 3"/>
</dbReference>
<dbReference type="ExpressionAtlas" id="Q9LK23">
    <property type="expression patterns" value="baseline and differential"/>
</dbReference>
<dbReference type="GO" id="GO:0009507">
    <property type="term" value="C:chloroplast"/>
    <property type="evidence" value="ECO:0007005"/>
    <property type="project" value="TAIR"/>
</dbReference>
<dbReference type="GO" id="GO:0005829">
    <property type="term" value="C:cytosol"/>
    <property type="evidence" value="ECO:0000314"/>
    <property type="project" value="TAIR"/>
</dbReference>
<dbReference type="GO" id="GO:0004345">
    <property type="term" value="F:glucose-6-phosphate dehydrogenase activity"/>
    <property type="evidence" value="ECO:0000314"/>
    <property type="project" value="TAIR"/>
</dbReference>
<dbReference type="GO" id="GO:0050661">
    <property type="term" value="F:NADP binding"/>
    <property type="evidence" value="ECO:0007669"/>
    <property type="project" value="InterPro"/>
</dbReference>
<dbReference type="GO" id="GO:0006006">
    <property type="term" value="P:glucose metabolic process"/>
    <property type="evidence" value="ECO:0000314"/>
    <property type="project" value="TAIR"/>
</dbReference>
<dbReference type="GO" id="GO:0009051">
    <property type="term" value="P:pentose-phosphate shunt, oxidative branch"/>
    <property type="evidence" value="ECO:0000314"/>
    <property type="project" value="TAIR"/>
</dbReference>
<dbReference type="FunFam" id="3.30.360.10:FF:000013">
    <property type="entry name" value="Glucose-6-phosphate 1-dehydrogenase"/>
    <property type="match status" value="1"/>
</dbReference>
<dbReference type="FunFam" id="3.40.50.720:FF:000222">
    <property type="entry name" value="Glucose-6-phosphate 1-dehydrogenase"/>
    <property type="match status" value="1"/>
</dbReference>
<dbReference type="Gene3D" id="3.30.360.10">
    <property type="entry name" value="Dihydrodipicolinate Reductase, domain 2"/>
    <property type="match status" value="1"/>
</dbReference>
<dbReference type="Gene3D" id="3.40.50.720">
    <property type="entry name" value="NAD(P)-binding Rossmann-like Domain"/>
    <property type="match status" value="1"/>
</dbReference>
<dbReference type="HAMAP" id="MF_00966">
    <property type="entry name" value="G6PD"/>
    <property type="match status" value="1"/>
</dbReference>
<dbReference type="InterPro" id="IPR001282">
    <property type="entry name" value="G6P_DH"/>
</dbReference>
<dbReference type="InterPro" id="IPR019796">
    <property type="entry name" value="G6P_DH_AS"/>
</dbReference>
<dbReference type="InterPro" id="IPR022675">
    <property type="entry name" value="G6P_DH_C"/>
</dbReference>
<dbReference type="InterPro" id="IPR022674">
    <property type="entry name" value="G6P_DH_NAD-bd"/>
</dbReference>
<dbReference type="InterPro" id="IPR036291">
    <property type="entry name" value="NAD(P)-bd_dom_sf"/>
</dbReference>
<dbReference type="NCBIfam" id="TIGR00871">
    <property type="entry name" value="zwf"/>
    <property type="match status" value="1"/>
</dbReference>
<dbReference type="PANTHER" id="PTHR23429:SF12">
    <property type="entry name" value="GLUCOSE-6-PHOSPHATE 1-DEHYDROGENASE 5, CYTOPLASMIC"/>
    <property type="match status" value="1"/>
</dbReference>
<dbReference type="PANTHER" id="PTHR23429">
    <property type="entry name" value="GLUCOSE-6-PHOSPHATE 1-DEHYDROGENASE G6PD"/>
    <property type="match status" value="1"/>
</dbReference>
<dbReference type="Pfam" id="PF02781">
    <property type="entry name" value="G6PD_C"/>
    <property type="match status" value="1"/>
</dbReference>
<dbReference type="Pfam" id="PF00479">
    <property type="entry name" value="G6PD_N"/>
    <property type="match status" value="1"/>
</dbReference>
<dbReference type="PIRSF" id="PIRSF000110">
    <property type="entry name" value="G6PD"/>
    <property type="match status" value="1"/>
</dbReference>
<dbReference type="PRINTS" id="PR00079">
    <property type="entry name" value="G6PDHDRGNASE"/>
</dbReference>
<dbReference type="SUPFAM" id="SSF55347">
    <property type="entry name" value="Glyceraldehyde-3-phosphate dehydrogenase-like, C-terminal domain"/>
    <property type="match status" value="1"/>
</dbReference>
<dbReference type="SUPFAM" id="SSF51735">
    <property type="entry name" value="NAD(P)-binding Rossmann-fold domains"/>
    <property type="match status" value="1"/>
</dbReference>
<dbReference type="PROSITE" id="PS00069">
    <property type="entry name" value="G6P_DEHYDROGENASE"/>
    <property type="match status" value="1"/>
</dbReference>